<reference key="1">
    <citation type="journal article" date="2011" name="Stand. Genomic Sci.">
        <title>Complete genome sequence of Rhodospirillum rubrum type strain (S1).</title>
        <authorList>
            <person name="Munk A.C."/>
            <person name="Copeland A."/>
            <person name="Lucas S."/>
            <person name="Lapidus A."/>
            <person name="Del Rio T.G."/>
            <person name="Barry K."/>
            <person name="Detter J.C."/>
            <person name="Hammon N."/>
            <person name="Israni S."/>
            <person name="Pitluck S."/>
            <person name="Brettin T."/>
            <person name="Bruce D."/>
            <person name="Han C."/>
            <person name="Tapia R."/>
            <person name="Gilna P."/>
            <person name="Schmutz J."/>
            <person name="Larimer F."/>
            <person name="Land M."/>
            <person name="Kyrpides N.C."/>
            <person name="Mavromatis K."/>
            <person name="Richardson P."/>
            <person name="Rohde M."/>
            <person name="Goeker M."/>
            <person name="Klenk H.P."/>
            <person name="Zhang Y."/>
            <person name="Roberts G.P."/>
            <person name="Reslewic S."/>
            <person name="Schwartz D.C."/>
        </authorList>
    </citation>
    <scope>NUCLEOTIDE SEQUENCE [LARGE SCALE GENOMIC DNA]</scope>
    <source>
        <strain>ATCC 11170 / ATH 1.1.1 / DSM 467 / LMG 4362 / NCIMB 8255 / S1</strain>
    </source>
</reference>
<protein>
    <recommendedName>
        <fullName evidence="1">NADH-quinone oxidoreductase subunit N</fullName>
        <ecNumber evidence="1">7.1.1.-</ecNumber>
    </recommendedName>
    <alternativeName>
        <fullName evidence="1">NADH dehydrogenase I subunit N</fullName>
    </alternativeName>
    <alternativeName>
        <fullName evidence="1">NDH-1 subunit N</fullName>
    </alternativeName>
</protein>
<organism>
    <name type="scientific">Rhodospirillum rubrum (strain ATCC 11170 / ATH 1.1.1 / DSM 467 / LMG 4362 / NCIMB 8255 / S1)</name>
    <dbReference type="NCBI Taxonomy" id="269796"/>
    <lineage>
        <taxon>Bacteria</taxon>
        <taxon>Pseudomonadati</taxon>
        <taxon>Pseudomonadota</taxon>
        <taxon>Alphaproteobacteria</taxon>
        <taxon>Rhodospirillales</taxon>
        <taxon>Rhodospirillaceae</taxon>
        <taxon>Rhodospirillum</taxon>
    </lineage>
</organism>
<accession>Q2RU27</accession>
<gene>
    <name evidence="1" type="primary">nuoN</name>
    <name type="ordered locus">Rru_A1568</name>
</gene>
<keyword id="KW-0997">Cell inner membrane</keyword>
<keyword id="KW-1003">Cell membrane</keyword>
<keyword id="KW-0472">Membrane</keyword>
<keyword id="KW-0520">NAD</keyword>
<keyword id="KW-0874">Quinone</keyword>
<keyword id="KW-1185">Reference proteome</keyword>
<keyword id="KW-1278">Translocase</keyword>
<keyword id="KW-0812">Transmembrane</keyword>
<keyword id="KW-1133">Transmembrane helix</keyword>
<keyword id="KW-0813">Transport</keyword>
<keyword id="KW-0830">Ubiquinone</keyword>
<name>NUON_RHORT</name>
<sequence length="487" mass="51423">MTFQSLILGPALPEILLAVLGLVLLMVGVFRKTDSTGLVGLLAVYGLLMALAVVGLGAAPETPQLAFGGLFIDDGFARYAKALTLLGAVLTLLLSMVWLKRENEGRFEFPILVLFATIGMMMMISANDLIALYMGLELQSLALYVIAAYQRDNLKSTEAGLKYFVLGALASGLLLYGMSLVYGFAGTTRFDGLAQVAAAEGGISTGLLIGIVFIIAGLAFKVSAVPFHMWAPDVYEGAPTPVTAFFAVAPKIAALTLFARVMMGPFAAYADQWQQVIILISILSMLLGGFAAIVQTNIKRLMAYSSIGHVGYALIGIAAGTTEGVRGVLVYLAIYLFMNVGTFTVILAMRQKGRAVEGINDLAGLSKQHPMMAAAMAVFMFSMAGVPPLAGFFGKFYVFMAAVNSGLFALAVIGVLSSVVAAFYYLRIIKLMYFDEATEPLDALSGTTMKVILIGTAAVVALFFLAPSVVVDGAQAAAEALTFASAR</sequence>
<comment type="function">
    <text evidence="1">NDH-1 shuttles electrons from NADH, via FMN and iron-sulfur (Fe-S) centers, to quinones in the respiratory chain. The immediate electron acceptor for the enzyme in this species is believed to be ubiquinone. Couples the redox reaction to proton translocation (for every two electrons transferred, four hydrogen ions are translocated across the cytoplasmic membrane), and thus conserves the redox energy in a proton gradient.</text>
</comment>
<comment type="catalytic activity">
    <reaction evidence="1">
        <text>a quinone + NADH + 5 H(+)(in) = a quinol + NAD(+) + 4 H(+)(out)</text>
        <dbReference type="Rhea" id="RHEA:57888"/>
        <dbReference type="ChEBI" id="CHEBI:15378"/>
        <dbReference type="ChEBI" id="CHEBI:24646"/>
        <dbReference type="ChEBI" id="CHEBI:57540"/>
        <dbReference type="ChEBI" id="CHEBI:57945"/>
        <dbReference type="ChEBI" id="CHEBI:132124"/>
    </reaction>
</comment>
<comment type="subunit">
    <text evidence="1">NDH-1 is composed of 14 different subunits. Subunits NuoA, H, J, K, L, M, N constitute the membrane sector of the complex.</text>
</comment>
<comment type="subcellular location">
    <subcellularLocation>
        <location evidence="1">Cell inner membrane</location>
        <topology evidence="1">Multi-pass membrane protein</topology>
    </subcellularLocation>
</comment>
<comment type="similarity">
    <text evidence="1">Belongs to the complex I subunit 2 family.</text>
</comment>
<feature type="chain" id="PRO_0000391214" description="NADH-quinone oxidoreductase subunit N">
    <location>
        <begin position="1"/>
        <end position="487"/>
    </location>
</feature>
<feature type="transmembrane region" description="Helical" evidence="1">
    <location>
        <begin position="7"/>
        <end position="27"/>
    </location>
</feature>
<feature type="transmembrane region" description="Helical" evidence="1">
    <location>
        <begin position="38"/>
        <end position="58"/>
    </location>
</feature>
<feature type="transmembrane region" description="Helical" evidence="1">
    <location>
        <begin position="79"/>
        <end position="99"/>
    </location>
</feature>
<feature type="transmembrane region" description="Helical" evidence="1">
    <location>
        <begin position="111"/>
        <end position="131"/>
    </location>
</feature>
<feature type="transmembrane region" description="Helical" evidence="1">
    <location>
        <begin position="164"/>
        <end position="184"/>
    </location>
</feature>
<feature type="transmembrane region" description="Helical" evidence="1">
    <location>
        <begin position="207"/>
        <end position="227"/>
    </location>
</feature>
<feature type="transmembrane region" description="Helical" evidence="1">
    <location>
        <begin position="238"/>
        <end position="258"/>
    </location>
</feature>
<feature type="transmembrane region" description="Helical" evidence="1">
    <location>
        <begin position="276"/>
        <end position="296"/>
    </location>
</feature>
<feature type="transmembrane region" description="Helical" evidence="1">
    <location>
        <begin position="301"/>
        <end position="321"/>
    </location>
</feature>
<feature type="transmembrane region" description="Helical" evidence="1">
    <location>
        <begin position="328"/>
        <end position="348"/>
    </location>
</feature>
<feature type="transmembrane region" description="Helical" evidence="1">
    <location>
        <begin position="373"/>
        <end position="393"/>
    </location>
</feature>
<feature type="transmembrane region" description="Helical" evidence="1">
    <location>
        <begin position="406"/>
        <end position="426"/>
    </location>
</feature>
<feature type="transmembrane region" description="Helical" evidence="1">
    <location>
        <begin position="451"/>
        <end position="471"/>
    </location>
</feature>
<dbReference type="EC" id="7.1.1.-" evidence="1"/>
<dbReference type="EMBL" id="CP000230">
    <property type="protein sequence ID" value="ABC22368.1"/>
    <property type="molecule type" value="Genomic_DNA"/>
</dbReference>
<dbReference type="RefSeq" id="WP_011389443.1">
    <property type="nucleotide sequence ID" value="NC_007643.1"/>
</dbReference>
<dbReference type="RefSeq" id="YP_426655.1">
    <property type="nucleotide sequence ID" value="NC_007643.1"/>
</dbReference>
<dbReference type="SMR" id="Q2RU27"/>
<dbReference type="STRING" id="269796.Rru_A1568"/>
<dbReference type="EnsemblBacteria" id="ABC22368">
    <property type="protein sequence ID" value="ABC22368"/>
    <property type="gene ID" value="Rru_A1568"/>
</dbReference>
<dbReference type="KEGG" id="rru:Rru_A1568"/>
<dbReference type="PATRIC" id="fig|269796.9.peg.1641"/>
<dbReference type="eggNOG" id="COG1007">
    <property type="taxonomic scope" value="Bacteria"/>
</dbReference>
<dbReference type="HOGENOM" id="CLU_007100_1_3_5"/>
<dbReference type="PhylomeDB" id="Q2RU27"/>
<dbReference type="Proteomes" id="UP000001929">
    <property type="component" value="Chromosome"/>
</dbReference>
<dbReference type="GO" id="GO:0005886">
    <property type="term" value="C:plasma membrane"/>
    <property type="evidence" value="ECO:0007669"/>
    <property type="project" value="UniProtKB-SubCell"/>
</dbReference>
<dbReference type="GO" id="GO:0008137">
    <property type="term" value="F:NADH dehydrogenase (ubiquinone) activity"/>
    <property type="evidence" value="ECO:0007669"/>
    <property type="project" value="InterPro"/>
</dbReference>
<dbReference type="GO" id="GO:0050136">
    <property type="term" value="F:NADH:ubiquinone reductase (non-electrogenic) activity"/>
    <property type="evidence" value="ECO:0007669"/>
    <property type="project" value="UniProtKB-UniRule"/>
</dbReference>
<dbReference type="GO" id="GO:0048038">
    <property type="term" value="F:quinone binding"/>
    <property type="evidence" value="ECO:0007669"/>
    <property type="project" value="UniProtKB-KW"/>
</dbReference>
<dbReference type="GO" id="GO:0042773">
    <property type="term" value="P:ATP synthesis coupled electron transport"/>
    <property type="evidence" value="ECO:0007669"/>
    <property type="project" value="InterPro"/>
</dbReference>
<dbReference type="HAMAP" id="MF_00445">
    <property type="entry name" value="NDH1_NuoN_1"/>
    <property type="match status" value="1"/>
</dbReference>
<dbReference type="InterPro" id="IPR010096">
    <property type="entry name" value="NADH-Q_OxRdtase_suN/2"/>
</dbReference>
<dbReference type="InterPro" id="IPR001750">
    <property type="entry name" value="ND/Mrp_TM"/>
</dbReference>
<dbReference type="NCBIfam" id="TIGR01770">
    <property type="entry name" value="NDH_I_N"/>
    <property type="match status" value="1"/>
</dbReference>
<dbReference type="NCBIfam" id="NF004440">
    <property type="entry name" value="PRK05777.1-3"/>
    <property type="match status" value="1"/>
</dbReference>
<dbReference type="PANTHER" id="PTHR22773">
    <property type="entry name" value="NADH DEHYDROGENASE"/>
    <property type="match status" value="1"/>
</dbReference>
<dbReference type="Pfam" id="PF00361">
    <property type="entry name" value="Proton_antipo_M"/>
    <property type="match status" value="1"/>
</dbReference>
<evidence type="ECO:0000255" key="1">
    <source>
        <dbReference type="HAMAP-Rule" id="MF_00445"/>
    </source>
</evidence>
<proteinExistence type="inferred from homology"/>